<organism>
    <name type="scientific">Castor canadensis</name>
    <name type="common">American beaver</name>
    <dbReference type="NCBI Taxonomy" id="51338"/>
    <lineage>
        <taxon>Eukaryota</taxon>
        <taxon>Metazoa</taxon>
        <taxon>Chordata</taxon>
        <taxon>Craniata</taxon>
        <taxon>Vertebrata</taxon>
        <taxon>Euteleostomi</taxon>
        <taxon>Mammalia</taxon>
        <taxon>Eutheria</taxon>
        <taxon>Euarchontoglires</taxon>
        <taxon>Glires</taxon>
        <taxon>Rodentia</taxon>
        <taxon>Castorimorpha</taxon>
        <taxon>Castoridae</taxon>
        <taxon>Castor</taxon>
    </lineage>
</organism>
<gene>
    <name type="primary">APOA1</name>
</gene>
<reference key="1">
    <citation type="journal article" date="2017" name="G3 (Bethesda)">
        <title>De Novo Genome and Transcriptome Assembly of the Canadian Beaver (Castor canadensis).</title>
        <authorList>
            <person name="Lok S."/>
            <person name="Paton T.A."/>
            <person name="Wang Z."/>
            <person name="Kaur G."/>
            <person name="Walker S."/>
            <person name="Yuen R.K."/>
            <person name="Sung W.W."/>
            <person name="Whitney J."/>
            <person name="Buchanan J.A."/>
            <person name="Trost B."/>
            <person name="Singh N."/>
            <person name="Apresto B."/>
            <person name="Chen N."/>
            <person name="Coole M."/>
            <person name="Dawson T.J."/>
            <person name="Ho K.Y."/>
            <person name="Hu Z."/>
            <person name="Pullenayegum S."/>
            <person name="Samler K."/>
            <person name="Shipstone A."/>
            <person name="Tsoi F."/>
            <person name="Wang T."/>
            <person name="Pereira S.L."/>
            <person name="Rostami P."/>
            <person name="Ryan C.A."/>
            <person name="Tong A.H."/>
            <person name="Ng K."/>
            <person name="Sundaravadanam Y."/>
            <person name="Simpson J.T."/>
            <person name="Lim B.K."/>
            <person name="Engstrom M.D."/>
            <person name="Dutton C.J."/>
            <person name="Kerr K.C."/>
            <person name="Franke M."/>
            <person name="Rapley W."/>
            <person name="Wintle R.F."/>
            <person name="Scherer S.W."/>
        </authorList>
    </citation>
    <scope>NUCLEOTIDE SEQUENCE [LARGE SCALE GENOMIC DNA]</scope>
</reference>
<reference key="2">
    <citation type="unpublished observations" date="2020-03">
        <authorList>
            <person name="Puppione D.L."/>
        </authorList>
    </citation>
    <scope>IDENTIFICATION</scope>
</reference>
<dbReference type="RefSeq" id="XP_020039910.1">
    <property type="nucleotide sequence ID" value="XM_020184321.1"/>
</dbReference>
<dbReference type="SMR" id="P0DTU5"/>
<dbReference type="GeneID" id="109699552"/>
<dbReference type="KEGG" id="ccan:109699552"/>
<dbReference type="CTD" id="335"/>
<dbReference type="OrthoDB" id="8727817at2759"/>
<dbReference type="Proteomes" id="UP000694852">
    <property type="component" value="Unplaced"/>
</dbReference>
<dbReference type="GO" id="GO:0042627">
    <property type="term" value="C:chylomicron"/>
    <property type="evidence" value="ECO:0007669"/>
    <property type="project" value="TreeGrafter"/>
</dbReference>
<dbReference type="GO" id="GO:1903561">
    <property type="term" value="C:extracellular vesicle"/>
    <property type="evidence" value="ECO:0007669"/>
    <property type="project" value="TreeGrafter"/>
</dbReference>
<dbReference type="GO" id="GO:0034364">
    <property type="term" value="C:high-density lipoprotein particle"/>
    <property type="evidence" value="ECO:0007669"/>
    <property type="project" value="UniProtKB-KW"/>
</dbReference>
<dbReference type="GO" id="GO:0034362">
    <property type="term" value="C:low-density lipoprotein particle"/>
    <property type="evidence" value="ECO:0007669"/>
    <property type="project" value="TreeGrafter"/>
</dbReference>
<dbReference type="GO" id="GO:0034361">
    <property type="term" value="C:very-low-density lipoprotein particle"/>
    <property type="evidence" value="ECO:0007669"/>
    <property type="project" value="TreeGrafter"/>
</dbReference>
<dbReference type="GO" id="GO:0120020">
    <property type="term" value="F:cholesterol transfer activity"/>
    <property type="evidence" value="ECO:0007669"/>
    <property type="project" value="TreeGrafter"/>
</dbReference>
<dbReference type="GO" id="GO:0060228">
    <property type="term" value="F:phosphatidylcholine-sterol O-acyltransferase activator activity"/>
    <property type="evidence" value="ECO:0007669"/>
    <property type="project" value="TreeGrafter"/>
</dbReference>
<dbReference type="GO" id="GO:0005543">
    <property type="term" value="F:phospholipid binding"/>
    <property type="evidence" value="ECO:0007669"/>
    <property type="project" value="TreeGrafter"/>
</dbReference>
<dbReference type="GO" id="GO:0042803">
    <property type="term" value="F:protein homodimerization activity"/>
    <property type="evidence" value="ECO:0000250"/>
    <property type="project" value="UniProtKB"/>
</dbReference>
<dbReference type="GO" id="GO:0055090">
    <property type="term" value="P:acylglycerol homeostasis"/>
    <property type="evidence" value="ECO:0007669"/>
    <property type="project" value="TreeGrafter"/>
</dbReference>
<dbReference type="GO" id="GO:0033344">
    <property type="term" value="P:cholesterol efflux"/>
    <property type="evidence" value="ECO:0007669"/>
    <property type="project" value="TreeGrafter"/>
</dbReference>
<dbReference type="GO" id="GO:0008203">
    <property type="term" value="P:cholesterol metabolic process"/>
    <property type="evidence" value="ECO:0007669"/>
    <property type="project" value="UniProtKB-KW"/>
</dbReference>
<dbReference type="GO" id="GO:0042157">
    <property type="term" value="P:lipoprotein metabolic process"/>
    <property type="evidence" value="ECO:0007669"/>
    <property type="project" value="InterPro"/>
</dbReference>
<dbReference type="GO" id="GO:0033700">
    <property type="term" value="P:phospholipid efflux"/>
    <property type="evidence" value="ECO:0007669"/>
    <property type="project" value="TreeGrafter"/>
</dbReference>
<dbReference type="FunFam" id="1.20.120.20:FF:000001">
    <property type="entry name" value="Apolipoprotein A-I"/>
    <property type="match status" value="1"/>
</dbReference>
<dbReference type="FunFam" id="1.20.5.20:FF:000001">
    <property type="entry name" value="apolipoprotein A-I"/>
    <property type="match status" value="1"/>
</dbReference>
<dbReference type="Gene3D" id="1.20.5.20">
    <property type="match status" value="1"/>
</dbReference>
<dbReference type="Gene3D" id="6.10.140.380">
    <property type="match status" value="1"/>
</dbReference>
<dbReference type="Gene3D" id="1.20.120.20">
    <property type="entry name" value="Apolipoprotein"/>
    <property type="match status" value="1"/>
</dbReference>
<dbReference type="InterPro" id="IPR000074">
    <property type="entry name" value="ApoA_E"/>
</dbReference>
<dbReference type="InterPro" id="IPR050163">
    <property type="entry name" value="Apolipoprotein_A1/A4/E"/>
</dbReference>
<dbReference type="PANTHER" id="PTHR18976">
    <property type="entry name" value="APOLIPOPROTEIN"/>
    <property type="match status" value="1"/>
</dbReference>
<dbReference type="PANTHER" id="PTHR18976:SF11">
    <property type="entry name" value="APOLIPOPROTEIN A-I"/>
    <property type="match status" value="1"/>
</dbReference>
<dbReference type="Pfam" id="PF01442">
    <property type="entry name" value="Apolipoprotein"/>
    <property type="match status" value="1"/>
</dbReference>
<dbReference type="SUPFAM" id="SSF58113">
    <property type="entry name" value="Apolipoprotein A-I"/>
    <property type="match status" value="1"/>
</dbReference>
<accession>P0DTU5</accession>
<name>APOA1_CASCN</name>
<protein>
    <recommendedName>
        <fullName>Apolipoprotein A-I</fullName>
        <shortName>Apo-AI</shortName>
        <shortName>ApoA-I</shortName>
    </recommendedName>
    <alternativeName>
        <fullName>Apolipoprotein A1</fullName>
    </alternativeName>
    <component>
        <recommendedName>
            <fullName>Proapolipoprotein A-I</fullName>
            <shortName>ProapoA-I</shortName>
        </recommendedName>
    </component>
    <component>
        <recommendedName>
            <fullName>Truncated apolipoprotein A-I</fullName>
        </recommendedName>
    </component>
</protein>
<comment type="function">
    <text evidence="3">Participates in the reverse transport of cholesterol from tissues to the liver for excretion by promoting cholesterol efflux from tissues and by acting as a cofactor for the lecithin cholesterol acyltransferase (LCAT). As part of the SPAP complex, activates spermatozoa motility.</text>
</comment>
<comment type="subunit">
    <text evidence="2 3 5">Homodimer (By similarity). Interacts with APOA1BP and CLU. Component of a sperm activating protein complex (SPAP), consisting of APOA1, an immunoglobulin heavy chain, an immunoglobulin light chain and albumin. Interacts with NDRG1. Interacts with SCGB3A2 (By similarity). Interacts with NAXE and YJEFN3 (By similarity).</text>
</comment>
<comment type="subcellular location">
    <subcellularLocation>
        <location evidence="3">Secreted</location>
    </subcellularLocation>
</comment>
<comment type="PTM">
    <text evidence="4">Glycosylated.</text>
</comment>
<comment type="PTM">
    <text evidence="4">Palmitoylated.</text>
</comment>
<comment type="PTM">
    <text evidence="1">Phosphorylation sites are present in the extracellular medium.</text>
</comment>
<comment type="similarity">
    <text evidence="7">Belongs to the apolipoprotein A1/A4/E family.</text>
</comment>
<feature type="signal peptide" evidence="6">
    <location>
        <begin position="1"/>
        <end position="18"/>
    </location>
</feature>
<feature type="chain" id="PRO_0000450129" description="Proapolipoprotein A-I">
    <location>
        <begin position="19"/>
        <end position="264"/>
    </location>
</feature>
<feature type="chain" id="PRO_0000450130" description="Apolipoprotein A-I">
    <location>
        <begin position="25"/>
        <end position="264"/>
    </location>
</feature>
<feature type="chain" id="PRO_0000450131" description="Truncated apolipoprotein A-I" evidence="3">
    <location>
        <begin position="25"/>
        <end position="263"/>
    </location>
</feature>
<feature type="repeat" description="1">
    <location>
        <begin position="67"/>
        <end position="88"/>
    </location>
</feature>
<feature type="repeat" description="2">
    <location>
        <begin position="89"/>
        <end position="110"/>
    </location>
</feature>
<feature type="repeat" description="3; half-length">
    <location>
        <begin position="111"/>
        <end position="121"/>
    </location>
</feature>
<feature type="repeat" description="4">
    <location>
        <begin position="122"/>
        <end position="143"/>
    </location>
</feature>
<feature type="repeat" description="5">
    <location>
        <begin position="144"/>
        <end position="165"/>
    </location>
</feature>
<feature type="repeat" description="6">
    <location>
        <begin position="166"/>
        <end position="187"/>
    </location>
</feature>
<feature type="repeat" description="7; truncated">
    <location>
        <begin position="188"/>
        <end position="207"/>
    </location>
</feature>
<feature type="repeat" description="8">
    <location>
        <begin position="208"/>
        <end position="229"/>
    </location>
</feature>
<feature type="repeat" description="9; half-length">
    <location>
        <begin position="230"/>
        <end position="240"/>
    </location>
</feature>
<feature type="repeat" description="10">
    <location>
        <begin position="241"/>
        <end position="264"/>
    </location>
</feature>
<feature type="region of interest" description="10 X approximate tandem repeats">
    <location>
        <begin position="67"/>
        <end position="264"/>
    </location>
</feature>
<feature type="modified residue" description="Methionine sulfoxide" evidence="3">
    <location>
        <position position="109"/>
    </location>
</feature>
<feature type="modified residue" description="Methionine sulfoxide" evidence="3">
    <location>
        <position position="193"/>
    </location>
</feature>
<sequence>MKAVVLTVAVLFLTGSQARHFWQQDDPQSPWDRVKDFATLYVDAVKDTGRDYVSQFESSALGKQLNLKLLDNWDTLGSSISKLREQLGPVTQEFWDNLEKDTEWLRQEMNKDLEEVKQKVQPYLEEFQKKWQEEVERYRQKVEPLSTELREGARQKLQELQEKLTPLGEELRDHARTHVDVLRTQLAPYSDKMRERLAERLTALKDSASFAEYHAKASEHLKTLREKAKPAIEDLGQGLLPVLENLKASFLSAIDDAAKKLSSQ</sequence>
<proteinExistence type="inferred from homology"/>
<keyword id="KW-0153">Cholesterol metabolism</keyword>
<keyword id="KW-0325">Glycoprotein</keyword>
<keyword id="KW-0345">HDL</keyword>
<keyword id="KW-0443">Lipid metabolism</keyword>
<keyword id="KW-0445">Lipid transport</keyword>
<keyword id="KW-0449">Lipoprotein</keyword>
<keyword id="KW-0558">Oxidation</keyword>
<keyword id="KW-0564">Palmitate</keyword>
<keyword id="KW-0597">Phosphoprotein</keyword>
<keyword id="KW-1185">Reference proteome</keyword>
<keyword id="KW-0677">Repeat</keyword>
<keyword id="KW-0964">Secreted</keyword>
<keyword id="KW-0732">Signal</keyword>
<keyword id="KW-0753">Steroid metabolism</keyword>
<keyword id="KW-1207">Sterol metabolism</keyword>
<keyword id="KW-0813">Transport</keyword>
<evidence type="ECO:0000250" key="1"/>
<evidence type="ECO:0000250" key="2">
    <source>
        <dbReference type="UniProtKB" id="G5BQH5"/>
    </source>
</evidence>
<evidence type="ECO:0000250" key="3">
    <source>
        <dbReference type="UniProtKB" id="P02647"/>
    </source>
</evidence>
<evidence type="ECO:0000250" key="4">
    <source>
        <dbReference type="UniProtKB" id="P02648"/>
    </source>
</evidence>
<evidence type="ECO:0000250" key="5">
    <source>
        <dbReference type="UniProtKB" id="P04639"/>
    </source>
</evidence>
<evidence type="ECO:0000255" key="6"/>
<evidence type="ECO:0000305" key="7"/>